<name>CYVA_VIOCT</name>
<proteinExistence type="evidence at protein level"/>
<comment type="function">
    <text evidence="4">Probably participates in a plant defense mechanism.</text>
</comment>
<comment type="domain">
    <text evidence="1">The presence of a 'disulfide through disulfide knot' structurally defines this protein as a knottin.</text>
</comment>
<comment type="PTM">
    <text evidence="2 3">This is a cyclic peptide.</text>
</comment>
<comment type="similarity">
    <text evidence="2">Belongs to the cyclotide family. Bracelet subfamily.</text>
</comment>
<comment type="caution">
    <text evidence="4">This peptide is cyclic. The start position was chosen by similarity to OAK1 (kalata-B1) for which the DNA sequence is known.</text>
</comment>
<dbReference type="SMR" id="P84635"/>
<dbReference type="GO" id="GO:0006952">
    <property type="term" value="P:defense response"/>
    <property type="evidence" value="ECO:0007669"/>
    <property type="project" value="UniProtKB-KW"/>
</dbReference>
<dbReference type="InterPro" id="IPR005535">
    <property type="entry name" value="Cyclotide"/>
</dbReference>
<dbReference type="InterPro" id="IPR012323">
    <property type="entry name" value="Cyclotide_bracelet_CS"/>
</dbReference>
<dbReference type="InterPro" id="IPR036146">
    <property type="entry name" value="Cyclotide_sf"/>
</dbReference>
<dbReference type="Pfam" id="PF03784">
    <property type="entry name" value="Cyclotide"/>
    <property type="match status" value="1"/>
</dbReference>
<dbReference type="PIRSF" id="PIRSF037891">
    <property type="entry name" value="Cycloviolacin"/>
    <property type="match status" value="1"/>
</dbReference>
<dbReference type="SUPFAM" id="SSF57038">
    <property type="entry name" value="Cyclotides"/>
    <property type="match status" value="1"/>
</dbReference>
<dbReference type="PROSITE" id="PS51052">
    <property type="entry name" value="CYCLOTIDE"/>
    <property type="match status" value="1"/>
</dbReference>
<dbReference type="PROSITE" id="PS60008">
    <property type="entry name" value="CYCLOTIDE_BRACELET"/>
    <property type="match status" value="1"/>
</dbReference>
<feature type="peptide" id="PRO_0000044699" description="Cyclotide vico-A">
    <location>
        <begin position="1"/>
        <end position="31"/>
    </location>
</feature>
<feature type="disulfide bond" evidence="1 2">
    <location>
        <begin position="5"/>
        <end position="21"/>
    </location>
</feature>
<feature type="disulfide bond" evidence="1 2">
    <location>
        <begin position="9"/>
        <end position="23"/>
    </location>
</feature>
<feature type="disulfide bond" evidence="1 2">
    <location>
        <begin position="14"/>
        <end position="28"/>
    </location>
</feature>
<feature type="cross-link" description="Cyclopeptide (Gly-Asn)" evidence="3">
    <location>
        <begin position="1"/>
        <end position="31"/>
    </location>
</feature>
<evidence type="ECO:0000250" key="1">
    <source>
        <dbReference type="UniProtKB" id="P56879"/>
    </source>
</evidence>
<evidence type="ECO:0000255" key="2">
    <source>
        <dbReference type="PROSITE-ProRule" id="PRU00395"/>
    </source>
</evidence>
<evidence type="ECO:0000269" key="3">
    <source>
    </source>
</evidence>
<evidence type="ECO:0000305" key="4"/>
<reference evidence="4" key="1">
    <citation type="journal article" date="2003" name="Anal. Biochem.">
        <title>Expression of Viola cyclotides by liquid chromatography-mass spectrometry and tandem mass spectrometry sequencing of intercysteine loops after introduction of charges and cleavage sites by aminoethylation.</title>
        <authorList>
            <person name="Goransson U."/>
            <person name="Broussalis A.M."/>
            <person name="Claeson P."/>
        </authorList>
    </citation>
    <scope>PROTEIN SEQUENCE</scope>
</reference>
<protein>
    <recommendedName>
        <fullName>Cyclotide vico-A</fullName>
    </recommendedName>
</protein>
<accession>P84635</accession>
<keyword id="KW-0903">Direct protein sequencing</keyword>
<keyword id="KW-1015">Disulfide bond</keyword>
<keyword id="KW-0960">Knottin</keyword>
<keyword id="KW-0611">Plant defense</keyword>
<sequence length="31" mass="3295">GSIPCAESCVYIPCFTGIAGCSCKNKVCYYN</sequence>
<organism>
    <name type="scientific">Viola cotyledon</name>
    <name type="common">Violeta</name>
    <dbReference type="NCBI Taxonomy" id="341256"/>
    <lineage>
        <taxon>Eukaryota</taxon>
        <taxon>Viridiplantae</taxon>
        <taxon>Streptophyta</taxon>
        <taxon>Embryophyta</taxon>
        <taxon>Tracheophyta</taxon>
        <taxon>Spermatophyta</taxon>
        <taxon>Magnoliopsida</taxon>
        <taxon>eudicotyledons</taxon>
        <taxon>Gunneridae</taxon>
        <taxon>Pentapetalae</taxon>
        <taxon>rosids</taxon>
        <taxon>fabids</taxon>
        <taxon>Malpighiales</taxon>
        <taxon>Violaceae</taxon>
        <taxon>Viola</taxon>
        <taxon>Viola subgen. Neoandinium</taxon>
        <taxon>Viola sect. Sempervivum</taxon>
    </lineage>
</organism>